<keyword id="KW-0325">Glycoprotein</keyword>
<keyword id="KW-0472">Membrane</keyword>
<keyword id="KW-1185">Reference proteome</keyword>
<keyword id="KW-0730">Sialic acid</keyword>
<keyword id="KW-0732">Signal</keyword>
<keyword id="KW-0812">Transmembrane</keyword>
<keyword id="KW-1133">Transmembrane helix</keyword>
<comment type="function">
    <text>This protein is a minor sialoglycoprotein in human erythrocyte membranes.</text>
</comment>
<comment type="subcellular location">
    <subcellularLocation>
        <location>Membrane</location>
        <topology>Single-pass type I membrane protein</topology>
    </subcellularLocation>
</comment>
<comment type="tissue specificity">
    <text>Erythrocytes.</text>
</comment>
<comment type="PTM">
    <text evidence="1">The N-terminal extracellular domain is heavily glycosylated on serine and threonine residues.</text>
</comment>
<comment type="similarity">
    <text evidence="5">Belongs to the glycophorin-A family.</text>
</comment>
<reference key="1">
    <citation type="journal article" date="1990" name="J. Biol. Chem.">
        <title>Identification of a novel human glycophorin, glycophorin E, by isolation of genomic clones and complementary DNA clones utilizing polymerase chain reaction.</title>
        <authorList>
            <person name="Kudo S."/>
            <person name="Fukuda M."/>
        </authorList>
    </citation>
    <scope>NUCLEOTIDE SEQUENCE [GENOMIC DNA]</scope>
    <scope>VARIANT GLU-13</scope>
</reference>
<reference key="2">
    <citation type="journal article" date="1990" name="Eur. J. Biochem.">
        <title>A novel gene member of the human glycophorin A and B gene family. Molecular cloning and expression.</title>
        <authorList>
            <person name="Vignal A."/>
            <person name="Rahuel C."/>
            <person name="London J."/>
            <person name="Cherif-Zahar B."/>
            <person name="Schaff S."/>
            <person name="Hattab C."/>
            <person name="Okubo Y."/>
            <person name="Cartron J.-P."/>
        </authorList>
    </citation>
    <scope>NUCLEOTIDE SEQUENCE [GENOMIC DNA]</scope>
    <source>
        <tissue>Blood</tissue>
    </source>
</reference>
<reference key="3">
    <citation type="submission" date="2005-09" db="EMBL/GenBank/DDBJ databases">
        <authorList>
            <person name="Mural R.J."/>
            <person name="Istrail S."/>
            <person name="Sutton G.G."/>
            <person name="Florea L."/>
            <person name="Halpern A.L."/>
            <person name="Mobarry C.M."/>
            <person name="Lippert R."/>
            <person name="Walenz B."/>
            <person name="Shatkay H."/>
            <person name="Dew I."/>
            <person name="Miller J.R."/>
            <person name="Flanigan M.J."/>
            <person name="Edwards N.J."/>
            <person name="Bolanos R."/>
            <person name="Fasulo D."/>
            <person name="Halldorsson B.V."/>
            <person name="Hannenhalli S."/>
            <person name="Turner R."/>
            <person name="Yooseph S."/>
            <person name="Lu F."/>
            <person name="Nusskern D.R."/>
            <person name="Shue B.C."/>
            <person name="Zheng X.H."/>
            <person name="Zhong F."/>
            <person name="Delcher A.L."/>
            <person name="Huson D.H."/>
            <person name="Kravitz S.A."/>
            <person name="Mouchard L."/>
            <person name="Reinert K."/>
            <person name="Remington K.A."/>
            <person name="Clark A.G."/>
            <person name="Waterman M.S."/>
            <person name="Eichler E.E."/>
            <person name="Adams M.D."/>
            <person name="Hunkapiller M.W."/>
            <person name="Myers E.W."/>
            <person name="Venter J.C."/>
        </authorList>
    </citation>
    <scope>NUCLEOTIDE SEQUENCE [LARGE SCALE GENOMIC DNA]</scope>
    <scope>VARIANT GLU-13</scope>
</reference>
<reference key="4">
    <citation type="journal article" date="2004" name="Genome Res.">
        <title>The status, quality, and expansion of the NIH full-length cDNA project: the Mammalian Gene Collection (MGC).</title>
        <authorList>
            <consortium name="The MGC Project Team"/>
        </authorList>
    </citation>
    <scope>NUCLEOTIDE SEQUENCE [LARGE SCALE MRNA]</scope>
    <source>
        <tissue>Lung</tissue>
    </source>
</reference>
<reference key="5">
    <citation type="journal article" date="1990" name="Gene">
        <title>Promoter sequence and chromosomal organization of the genes encoding glycophorins A, B and E.</title>
        <authorList>
            <person name="Vignal A."/>
            <person name="London J."/>
            <person name="Rahuel C."/>
            <person name="Cartron J.-P."/>
        </authorList>
    </citation>
    <scope>NUCLEOTIDE SEQUENCE [GENOMIC DNA] OF 1-12</scope>
</reference>
<reference key="6">
    <citation type="journal article" date="1994" name="J. Biochem.">
        <title>Characterization of glycophorin A transcripts: control by the common erythroid-specific promoter and alternative usage of different polyadenylation signals.</title>
        <authorList>
            <person name="Kudo S."/>
            <person name="Onda M."/>
            <person name="Fukuda M."/>
        </authorList>
    </citation>
    <scope>NUCLEOTIDE SEQUENCE [GENOMIC DNA] OF 1-12</scope>
    <source>
        <tissue>Blood</tissue>
    </source>
</reference>
<gene>
    <name type="primary">GYPE</name>
    <name type="synonym">GPE</name>
</gene>
<evidence type="ECO:0000250" key="1"/>
<evidence type="ECO:0000255" key="2"/>
<evidence type="ECO:0000269" key="3">
    <source>
    </source>
</evidence>
<evidence type="ECO:0000269" key="4">
    <source ref="3"/>
</evidence>
<evidence type="ECO:0000305" key="5"/>
<accession>P15421</accession>
<accession>D3DNZ5</accession>
<sequence>MYGKIIFVLLLSGIVSISASSTTGVAMHTSTSSSVTKSYISSQTNGITLINWWAMARVIFEVMLVVVGMIILISYCIR</sequence>
<name>GLPE_HUMAN</name>
<dbReference type="EMBL" id="M57233">
    <property type="protein sequence ID" value="AAA63179.1"/>
    <property type="molecule type" value="Genomic_DNA"/>
</dbReference>
<dbReference type="EMBL" id="M29605">
    <property type="protein sequence ID" value="AAA52766.1"/>
    <property type="molecule type" value="Genomic_DNA"/>
</dbReference>
<dbReference type="EMBL" id="M29609">
    <property type="protein sequence ID" value="AAA52766.1"/>
    <property type="status" value="JOINED"/>
    <property type="molecule type" value="Genomic_DNA"/>
</dbReference>
<dbReference type="EMBL" id="M29608">
    <property type="protein sequence ID" value="AAA52766.1"/>
    <property type="status" value="JOINED"/>
    <property type="molecule type" value="Genomic_DNA"/>
</dbReference>
<dbReference type="EMBL" id="M29610">
    <property type="protein sequence ID" value="AAA52575.1"/>
    <property type="molecule type" value="mRNA"/>
</dbReference>
<dbReference type="EMBL" id="X53010">
    <property type="protein sequence ID" value="CAA37191.1"/>
    <property type="molecule type" value="Genomic_DNA"/>
</dbReference>
<dbReference type="EMBL" id="X53004">
    <property type="protein sequence ID" value="CAA37189.1"/>
    <property type="molecule type" value="Genomic_DNA"/>
</dbReference>
<dbReference type="EMBL" id="X53005">
    <property type="protein sequence ID" value="CAA37189.1"/>
    <property type="status" value="JOINED"/>
    <property type="molecule type" value="Genomic_DNA"/>
</dbReference>
<dbReference type="EMBL" id="X53008">
    <property type="protein sequence ID" value="CAA37189.1"/>
    <property type="status" value="JOINED"/>
    <property type="molecule type" value="Genomic_DNA"/>
</dbReference>
<dbReference type="EMBL" id="CH471056">
    <property type="protein sequence ID" value="EAX05065.1"/>
    <property type="molecule type" value="Genomic_DNA"/>
</dbReference>
<dbReference type="EMBL" id="CH471056">
    <property type="protein sequence ID" value="EAX05066.1"/>
    <property type="molecule type" value="Genomic_DNA"/>
</dbReference>
<dbReference type="EMBL" id="CH471056">
    <property type="protein sequence ID" value="EAX05067.1"/>
    <property type="molecule type" value="Genomic_DNA"/>
</dbReference>
<dbReference type="EMBL" id="BC017864">
    <property type="protein sequence ID" value="AAH17864.1"/>
    <property type="molecule type" value="mRNA"/>
</dbReference>
<dbReference type="EMBL" id="M57234">
    <property type="status" value="NOT_ANNOTATED_CDS"/>
    <property type="molecule type" value="Genomic_DNA"/>
</dbReference>
<dbReference type="EMBL" id="M57232">
    <property type="protein sequence ID" value="AAA35923.1"/>
    <property type="molecule type" value="Genomic_DNA"/>
</dbReference>
<dbReference type="EMBL" id="L31863">
    <property type="protein sequence ID" value="AAC41697.1"/>
    <property type="molecule type" value="Genomic_DNA"/>
</dbReference>
<dbReference type="CCDS" id="CCDS47138.1"/>
<dbReference type="PIR" id="A34931">
    <property type="entry name" value="A34931"/>
</dbReference>
<dbReference type="RefSeq" id="NP_002093.2">
    <property type="nucleotide sequence ID" value="NM_002102.4"/>
</dbReference>
<dbReference type="RefSeq" id="NP_941391.2">
    <property type="nucleotide sequence ID" value="NM_198682.3"/>
</dbReference>
<dbReference type="RefSeq" id="XP_016863628.1">
    <property type="nucleotide sequence ID" value="XM_017008139.1"/>
</dbReference>
<dbReference type="RefSeq" id="XP_016863629.1">
    <property type="nucleotide sequence ID" value="XM_017008140.1"/>
</dbReference>
<dbReference type="SMR" id="P15421"/>
<dbReference type="FunCoup" id="P15421">
    <property type="interactions" value="3"/>
</dbReference>
<dbReference type="STRING" id="9606.ENSP00000351430"/>
<dbReference type="BioMuta" id="GYPE"/>
<dbReference type="MassIVE" id="P15421"/>
<dbReference type="PaxDb" id="9606-ENSP00000351430"/>
<dbReference type="PeptideAtlas" id="P15421"/>
<dbReference type="Antibodypedia" id="76856">
    <property type="antibodies" value="42 antibodies from 8 providers"/>
</dbReference>
<dbReference type="DNASU" id="2996"/>
<dbReference type="Ensembl" id="ENST00000358615.9">
    <property type="protein sequence ID" value="ENSP00000351430.4"/>
    <property type="gene ID" value="ENSG00000197465.14"/>
</dbReference>
<dbReference type="Ensembl" id="ENST00000437468.2">
    <property type="protein sequence ID" value="ENSP00000400698.2"/>
    <property type="gene ID" value="ENSG00000197465.14"/>
</dbReference>
<dbReference type="GeneID" id="2996"/>
<dbReference type="KEGG" id="hsa:2996"/>
<dbReference type="MANE-Select" id="ENST00000358615.9">
    <property type="protein sequence ID" value="ENSP00000351430.4"/>
    <property type="RefSeq nucleotide sequence ID" value="NM_198682.3"/>
    <property type="RefSeq protein sequence ID" value="NP_941391.2"/>
</dbReference>
<dbReference type="UCSC" id="uc003ijj.4">
    <property type="organism name" value="human"/>
</dbReference>
<dbReference type="AGR" id="HGNC:4705"/>
<dbReference type="CTD" id="2996"/>
<dbReference type="DisGeNET" id="2996"/>
<dbReference type="GeneCards" id="GYPE"/>
<dbReference type="HGNC" id="HGNC:4705">
    <property type="gene designation" value="GYPE"/>
</dbReference>
<dbReference type="HPA" id="ENSG00000197465">
    <property type="expression patterns" value="Tissue enriched (bone)"/>
</dbReference>
<dbReference type="MIM" id="138590">
    <property type="type" value="gene"/>
</dbReference>
<dbReference type="neXtProt" id="NX_P15421"/>
<dbReference type="OpenTargets" id="ENSG00000197465"/>
<dbReference type="PharmGKB" id="PA29083"/>
<dbReference type="VEuPathDB" id="HostDB:ENSG00000197465"/>
<dbReference type="eggNOG" id="ENOG502TKYQ">
    <property type="taxonomic scope" value="Eukaryota"/>
</dbReference>
<dbReference type="GeneTree" id="ENSGT00550000075214"/>
<dbReference type="HOGENOM" id="CLU_154690_1_0_1"/>
<dbReference type="InParanoid" id="P15421"/>
<dbReference type="PAN-GO" id="P15421">
    <property type="GO annotations" value="1 GO annotation based on evolutionary models"/>
</dbReference>
<dbReference type="PhylomeDB" id="P15421"/>
<dbReference type="TreeFam" id="TF341456"/>
<dbReference type="PathwayCommons" id="P15421"/>
<dbReference type="BioGRID-ORCS" id="2996">
    <property type="hits" value="85 hits in 1073 CRISPR screens"/>
</dbReference>
<dbReference type="GeneWiki" id="GYPE"/>
<dbReference type="GenomeRNAi" id="2996"/>
<dbReference type="Pharos" id="P15421">
    <property type="development level" value="Tdark"/>
</dbReference>
<dbReference type="PRO" id="PR:P15421"/>
<dbReference type="Proteomes" id="UP000005640">
    <property type="component" value="Chromosome 4"/>
</dbReference>
<dbReference type="RNAct" id="P15421">
    <property type="molecule type" value="protein"/>
</dbReference>
<dbReference type="Bgee" id="ENSG00000197465">
    <property type="expression patterns" value="Expressed in trabecular bone tissue and 108 other cell types or tissues"/>
</dbReference>
<dbReference type="ExpressionAtlas" id="P15421">
    <property type="expression patterns" value="baseline and differential"/>
</dbReference>
<dbReference type="GO" id="GO:0005886">
    <property type="term" value="C:plasma membrane"/>
    <property type="evidence" value="ECO:0000318"/>
    <property type="project" value="GO_Central"/>
</dbReference>
<dbReference type="Gene3D" id="1.20.5.70">
    <property type="match status" value="1"/>
</dbReference>
<dbReference type="InterPro" id="IPR001195">
    <property type="entry name" value="Glycophorin"/>
</dbReference>
<dbReference type="PANTHER" id="PTHR13813">
    <property type="entry name" value="GLYCOPHORIN"/>
    <property type="match status" value="1"/>
</dbReference>
<dbReference type="PANTHER" id="PTHR13813:SF4">
    <property type="entry name" value="GLYCOPHORIN-E"/>
    <property type="match status" value="1"/>
</dbReference>
<protein>
    <recommendedName>
        <fullName>Glycophorin-E</fullName>
    </recommendedName>
</protein>
<organism>
    <name type="scientific">Homo sapiens</name>
    <name type="common">Human</name>
    <dbReference type="NCBI Taxonomy" id="9606"/>
    <lineage>
        <taxon>Eukaryota</taxon>
        <taxon>Metazoa</taxon>
        <taxon>Chordata</taxon>
        <taxon>Craniata</taxon>
        <taxon>Vertebrata</taxon>
        <taxon>Euteleostomi</taxon>
        <taxon>Mammalia</taxon>
        <taxon>Eutheria</taxon>
        <taxon>Euarchontoglires</taxon>
        <taxon>Primates</taxon>
        <taxon>Haplorrhini</taxon>
        <taxon>Catarrhini</taxon>
        <taxon>Hominidae</taxon>
        <taxon>Homo</taxon>
    </lineage>
</organism>
<feature type="signal peptide">
    <location>
        <begin position="1"/>
        <end position="19"/>
    </location>
</feature>
<feature type="chain" id="PRO_0000012138" description="Glycophorin-E">
    <location>
        <begin position="20"/>
        <end position="78"/>
    </location>
</feature>
<feature type="topological domain" description="Extracellular" evidence="2">
    <location>
        <begin position="20"/>
        <end position="52"/>
    </location>
</feature>
<feature type="transmembrane region" description="Helical" evidence="2">
    <location>
        <begin position="53"/>
        <end position="73"/>
    </location>
</feature>
<feature type="topological domain" description="Cytoplasmic" evidence="2">
    <location>
        <begin position="74"/>
        <end position="78"/>
    </location>
</feature>
<feature type="sequence variant" id="VAR_062006" description="In dbSNP:rs1132785." evidence="3 4">
    <original>G</original>
    <variation>E</variation>
    <location>
        <position position="13"/>
    </location>
</feature>
<feature type="sequence variant" id="VAR_053111" description="In dbSNP:rs17018900.">
    <original>R</original>
    <variation>P</variation>
    <location>
        <position position="78"/>
    </location>
</feature>
<proteinExistence type="evidence at transcript level"/>